<comment type="function">
    <text evidence="1">Forms passive diffusion pores that allow small molecular weight hydrophilic materials across the outer membrane.</text>
</comment>
<comment type="subunit">
    <text evidence="1">Monomer.</text>
</comment>
<comment type="subcellular location">
    <subcellularLocation>
        <location evidence="1">Cell outer membrane</location>
        <topology evidence="1">Multi-pass membrane protein</topology>
    </subcellularLocation>
</comment>
<comment type="domain">
    <text evidence="1">Consists of 16-stranded beta-barrel sheets, with large surface-exposed loops, that form a transmembrane pore at the center of each barrel. The pore is partially ocluded by a peptide loop that folds into the pore lumen.</text>
</comment>
<comment type="miscellaneous">
    <text evidence="1">The pore formed by Omp2a is larger than the one formed by Omp2b. Omp2b pores have optimal permeability to allow growth and protection against harmful compounds. The larger pore formed by Omp2a may be advantageous for intracellular growth, when the bacterium is competing with the host cell for nutrients whose concentration is particularly low within the phagosome.</text>
</comment>
<comment type="similarity">
    <text evidence="3">Belongs to the alphaproteobacteria porin family.</text>
</comment>
<gene>
    <name type="primary">omp2a</name>
</gene>
<protein>
    <recommendedName>
        <fullName>Porin Omp2a</fullName>
    </recommendedName>
</protein>
<organism>
    <name type="scientific">Brucella suis</name>
    <dbReference type="NCBI Taxonomy" id="29461"/>
    <lineage>
        <taxon>Bacteria</taxon>
        <taxon>Pseudomonadati</taxon>
        <taxon>Pseudomonadota</taxon>
        <taxon>Alphaproteobacteria</taxon>
        <taxon>Hyphomicrobiales</taxon>
        <taxon>Brucellaceae</taxon>
        <taxon>Brucella/Ochrobactrum group</taxon>
        <taxon>Brucella</taxon>
    </lineage>
</organism>
<name>OMP2A_BRUSS</name>
<feature type="signal peptide" evidence="2">
    <location>
        <begin position="1"/>
        <end position="22"/>
    </location>
</feature>
<feature type="chain" id="PRO_0000412628" description="Porin Omp2a">
    <location>
        <begin position="23"/>
        <end position="367"/>
    </location>
</feature>
<feature type="sequence variant" description="In strain: 83-210.">
    <original>VH</original>
    <variation>IS</variation>
    <location>
        <begin position="59"/>
        <end position="60"/>
    </location>
</feature>
<feature type="sequence variant" description="In strain: 83-210.">
    <original>DR</original>
    <variation>SV</variation>
    <location>
        <begin position="130"/>
        <end position="131"/>
    </location>
</feature>
<feature type="sequence variant" description="In strain: 83-210.">
    <original>S</original>
    <variation>N</variation>
    <location>
        <position position="139"/>
    </location>
</feature>
<feature type="sequence variant" description="In strain: 83-210.">
    <original>A</original>
    <variation>V</variation>
    <location>
        <position position="241"/>
    </location>
</feature>
<feature type="sequence variant" description="In strain: 83-210.">
    <original>P</original>
    <variation>S</variation>
    <location>
        <position position="246"/>
    </location>
</feature>
<feature type="sequence variant" description="In strain: 83-210.">
    <original>V</original>
    <variation>A</variation>
    <location>
        <position position="304"/>
    </location>
</feature>
<dbReference type="EMBL" id="AY008721">
    <property type="protein sequence ID" value="AAG38245.1"/>
    <property type="molecule type" value="Genomic_DNA"/>
</dbReference>
<dbReference type="EMBL" id="AM712079">
    <property type="protein sequence ID" value="CAM98689.1"/>
    <property type="molecule type" value="Genomic_DNA"/>
</dbReference>
<dbReference type="RefSeq" id="WP_006190002.1">
    <property type="nucleotide sequence ID" value="NZ_UFTY01000001.1"/>
</dbReference>
<dbReference type="SMR" id="P0DI94"/>
<dbReference type="GO" id="GO:0009279">
    <property type="term" value="C:cell outer membrane"/>
    <property type="evidence" value="ECO:0007669"/>
    <property type="project" value="UniProtKB-SubCell"/>
</dbReference>
<dbReference type="GO" id="GO:0046930">
    <property type="term" value="C:pore complex"/>
    <property type="evidence" value="ECO:0007669"/>
    <property type="project" value="UniProtKB-KW"/>
</dbReference>
<dbReference type="GO" id="GO:0015288">
    <property type="term" value="F:porin activity"/>
    <property type="evidence" value="ECO:0007669"/>
    <property type="project" value="UniProtKB-KW"/>
</dbReference>
<dbReference type="GO" id="GO:0006811">
    <property type="term" value="P:monoatomic ion transport"/>
    <property type="evidence" value="ECO:0007669"/>
    <property type="project" value="UniProtKB-KW"/>
</dbReference>
<dbReference type="InterPro" id="IPR003684">
    <property type="entry name" value="Porin_alphabac"/>
</dbReference>
<dbReference type="Pfam" id="PF02530">
    <property type="entry name" value="Porin_2"/>
    <property type="match status" value="1"/>
</dbReference>
<dbReference type="SUPFAM" id="SSF56935">
    <property type="entry name" value="Porins"/>
    <property type="match status" value="1"/>
</dbReference>
<evidence type="ECO:0000250" key="1">
    <source>
        <dbReference type="UniProtKB" id="B2SAB9"/>
    </source>
</evidence>
<evidence type="ECO:0000255" key="2"/>
<evidence type="ECO:0000305" key="3"/>
<sequence>MNIKSLLLGSAAALVAASGAQAADAIVAPEPEAVEYVRVCDAYGAGYFYIPGTETCLRVHGYVRYDVKGGDDVYTGSDRKGWDKGARFALMFNTNSETELGTLGTYTQLRFNYTSNNSRHDGQYGDFSDDRDVADGGVSTGTDLQFAYITLGGFKVGIDESEFHTFTGYLGDVINDDVVAAGSYRTGKIAYTFTGGNGFSAVIALEQGGEDVDNDYTIDGYMPHVVGGLKYAGGWGSIAGAVAYDPVIEEWATKVRGDVNITDRFSVWLQGAYSSAATPNQNYGQWGGDWAVWGGAKFIATEKVTFNLQAAHDDWGKTAVTANVAYQLVPGFTITPEVSYTKFGGEWKDTVAEDNAWGGIVRFQRSF</sequence>
<accession>P0DI94</accession>
<accession>Q45429</accession>
<accession>Q7CEH9</accession>
<accession>Q9EY45</accession>
<reference key="1">
    <citation type="journal article" date="2001" name="J. Bacteriol.">
        <title>Molecular, antigenic, and functional analyses of Omp2b porin size variants of Brucella spp.</title>
        <authorList>
            <person name="Paquet J.-Y."/>
            <person name="Diaz M.A."/>
            <person name="Genevrois S."/>
            <person name="Grayon M."/>
            <person name="Verger J.-M."/>
            <person name="de Bolle X."/>
            <person name="Lakey J.H."/>
            <person name="Letesson J.-J."/>
            <person name="Cloeckaert A."/>
        </authorList>
    </citation>
    <scope>NUCLEOTIDE SEQUENCE [GENOMIC DNA]</scope>
    <source>
        <strain>83-210</strain>
    </source>
</reference>
<reference key="2">
    <citation type="journal article" date="2008" name="Int. J. Syst. Evol. Microbiol.">
        <title>Brucella microti sp. nov., isolated from the common vole Microtus arvalis.</title>
        <authorList>
            <person name="Scholz H.C."/>
            <person name="Hubalek Z."/>
            <person name="Sedlacek I."/>
            <person name="Vergnaud G."/>
            <person name="Tomaso H."/>
            <person name="Al Dahouk S."/>
            <person name="Melzer F."/>
            <person name="Kampfer P."/>
            <person name="Neubauer H."/>
            <person name="Cloeckaert A."/>
            <person name="Maquart M."/>
            <person name="Zygmunt M.S."/>
            <person name="Whatmore A.M."/>
            <person name="Falsen E."/>
            <person name="Bahn P."/>
            <person name="Gollner C."/>
            <person name="Pfeffer M."/>
            <person name="Huber B."/>
            <person name="Busse H.J."/>
            <person name="Nockler K."/>
        </authorList>
    </citation>
    <scope>NUCLEOTIDE SEQUENCE [GENOMIC DNA]</scope>
    <source>
        <strain>8035</strain>
    </source>
</reference>
<proteinExistence type="inferred from homology"/>
<keyword id="KW-0998">Cell outer membrane</keyword>
<keyword id="KW-0406">Ion transport</keyword>
<keyword id="KW-0472">Membrane</keyword>
<keyword id="KW-0626">Porin</keyword>
<keyword id="KW-0732">Signal</keyword>
<keyword id="KW-0812">Transmembrane</keyword>
<keyword id="KW-1134">Transmembrane beta strand</keyword>
<keyword id="KW-0813">Transport</keyword>